<gene>
    <name evidence="1" type="primary">pgk</name>
    <name type="ordered locus">CGSHiGG_05875</name>
</gene>
<reference key="1">
    <citation type="journal article" date="2007" name="Genome Biol.">
        <title>Characterization and modeling of the Haemophilus influenzae core and supragenomes based on the complete genomic sequences of Rd and 12 clinical nontypeable strains.</title>
        <authorList>
            <person name="Hogg J.S."/>
            <person name="Hu F.Z."/>
            <person name="Janto B."/>
            <person name="Boissy R."/>
            <person name="Hayes J."/>
            <person name="Keefe R."/>
            <person name="Post J.C."/>
            <person name="Ehrlich G.D."/>
        </authorList>
    </citation>
    <scope>NUCLEOTIDE SEQUENCE [LARGE SCALE GENOMIC DNA]</scope>
    <source>
        <strain>PittGG</strain>
    </source>
</reference>
<name>PGK_HAEIG</name>
<comment type="catalytic activity">
    <reaction evidence="1">
        <text>(2R)-3-phosphoglycerate + ATP = (2R)-3-phospho-glyceroyl phosphate + ADP</text>
        <dbReference type="Rhea" id="RHEA:14801"/>
        <dbReference type="ChEBI" id="CHEBI:30616"/>
        <dbReference type="ChEBI" id="CHEBI:57604"/>
        <dbReference type="ChEBI" id="CHEBI:58272"/>
        <dbReference type="ChEBI" id="CHEBI:456216"/>
        <dbReference type="EC" id="2.7.2.3"/>
    </reaction>
</comment>
<comment type="pathway">
    <text evidence="1">Carbohydrate degradation; glycolysis; pyruvate from D-glyceraldehyde 3-phosphate: step 2/5.</text>
</comment>
<comment type="subunit">
    <text evidence="1">Monomer.</text>
</comment>
<comment type="subcellular location">
    <subcellularLocation>
        <location evidence="1">Cytoplasm</location>
    </subcellularLocation>
</comment>
<comment type="similarity">
    <text evidence="1">Belongs to the phosphoglycerate kinase family.</text>
</comment>
<accession>A5UH30</accession>
<dbReference type="EC" id="2.7.2.3" evidence="1"/>
<dbReference type="EMBL" id="CP000672">
    <property type="protein sequence ID" value="ABR00086.1"/>
    <property type="molecule type" value="Genomic_DNA"/>
</dbReference>
<dbReference type="SMR" id="A5UH30"/>
<dbReference type="KEGG" id="hiq:CGSHiGG_05875"/>
<dbReference type="HOGENOM" id="CLU_025427_0_2_6"/>
<dbReference type="UniPathway" id="UPA00109">
    <property type="reaction ID" value="UER00185"/>
</dbReference>
<dbReference type="Proteomes" id="UP000001990">
    <property type="component" value="Chromosome"/>
</dbReference>
<dbReference type="GO" id="GO:0005829">
    <property type="term" value="C:cytosol"/>
    <property type="evidence" value="ECO:0007669"/>
    <property type="project" value="TreeGrafter"/>
</dbReference>
<dbReference type="GO" id="GO:0043531">
    <property type="term" value="F:ADP binding"/>
    <property type="evidence" value="ECO:0007669"/>
    <property type="project" value="TreeGrafter"/>
</dbReference>
<dbReference type="GO" id="GO:0005524">
    <property type="term" value="F:ATP binding"/>
    <property type="evidence" value="ECO:0007669"/>
    <property type="project" value="UniProtKB-KW"/>
</dbReference>
<dbReference type="GO" id="GO:0004618">
    <property type="term" value="F:phosphoglycerate kinase activity"/>
    <property type="evidence" value="ECO:0007669"/>
    <property type="project" value="UniProtKB-UniRule"/>
</dbReference>
<dbReference type="GO" id="GO:0006094">
    <property type="term" value="P:gluconeogenesis"/>
    <property type="evidence" value="ECO:0007669"/>
    <property type="project" value="TreeGrafter"/>
</dbReference>
<dbReference type="GO" id="GO:0006096">
    <property type="term" value="P:glycolytic process"/>
    <property type="evidence" value="ECO:0007669"/>
    <property type="project" value="UniProtKB-UniRule"/>
</dbReference>
<dbReference type="FunFam" id="3.40.50.1260:FF:000001">
    <property type="entry name" value="Phosphoglycerate kinase"/>
    <property type="match status" value="1"/>
</dbReference>
<dbReference type="FunFam" id="3.40.50.1260:FF:000002">
    <property type="entry name" value="Phosphoglycerate kinase"/>
    <property type="match status" value="1"/>
</dbReference>
<dbReference type="Gene3D" id="3.40.50.1260">
    <property type="entry name" value="Phosphoglycerate kinase, N-terminal domain"/>
    <property type="match status" value="2"/>
</dbReference>
<dbReference type="HAMAP" id="MF_00145">
    <property type="entry name" value="Phosphoglyc_kinase"/>
    <property type="match status" value="1"/>
</dbReference>
<dbReference type="InterPro" id="IPR001576">
    <property type="entry name" value="Phosphoglycerate_kinase"/>
</dbReference>
<dbReference type="InterPro" id="IPR015911">
    <property type="entry name" value="Phosphoglycerate_kinase_CS"/>
</dbReference>
<dbReference type="InterPro" id="IPR015824">
    <property type="entry name" value="Phosphoglycerate_kinase_N"/>
</dbReference>
<dbReference type="InterPro" id="IPR036043">
    <property type="entry name" value="Phosphoglycerate_kinase_sf"/>
</dbReference>
<dbReference type="PANTHER" id="PTHR11406">
    <property type="entry name" value="PHOSPHOGLYCERATE KINASE"/>
    <property type="match status" value="1"/>
</dbReference>
<dbReference type="PANTHER" id="PTHR11406:SF23">
    <property type="entry name" value="PHOSPHOGLYCERATE KINASE 1, CHLOROPLASTIC-RELATED"/>
    <property type="match status" value="1"/>
</dbReference>
<dbReference type="Pfam" id="PF00162">
    <property type="entry name" value="PGK"/>
    <property type="match status" value="1"/>
</dbReference>
<dbReference type="PIRSF" id="PIRSF000724">
    <property type="entry name" value="Pgk"/>
    <property type="match status" value="1"/>
</dbReference>
<dbReference type="PRINTS" id="PR00477">
    <property type="entry name" value="PHGLYCKINASE"/>
</dbReference>
<dbReference type="SUPFAM" id="SSF53748">
    <property type="entry name" value="Phosphoglycerate kinase"/>
    <property type="match status" value="1"/>
</dbReference>
<dbReference type="PROSITE" id="PS00111">
    <property type="entry name" value="PGLYCERATE_KINASE"/>
    <property type="match status" value="1"/>
</dbReference>
<protein>
    <recommendedName>
        <fullName evidence="1">Phosphoglycerate kinase</fullName>
        <ecNumber evidence="1">2.7.2.3</ecNumber>
    </recommendedName>
</protein>
<proteinExistence type="inferred from homology"/>
<organism>
    <name type="scientific">Haemophilus influenzae (strain PittGG)</name>
    <dbReference type="NCBI Taxonomy" id="374931"/>
    <lineage>
        <taxon>Bacteria</taxon>
        <taxon>Pseudomonadati</taxon>
        <taxon>Pseudomonadota</taxon>
        <taxon>Gammaproteobacteria</taxon>
        <taxon>Pasteurellales</taxon>
        <taxon>Pasteurellaceae</taxon>
        <taxon>Haemophilus</taxon>
    </lineage>
</organism>
<keyword id="KW-0067">ATP-binding</keyword>
<keyword id="KW-0963">Cytoplasm</keyword>
<keyword id="KW-0324">Glycolysis</keyword>
<keyword id="KW-0418">Kinase</keyword>
<keyword id="KW-0547">Nucleotide-binding</keyword>
<keyword id="KW-0808">Transferase</keyword>
<sequence length="386" mass="40985">MSVIKMTDLDLAGKRVFIRADLNVPVKDGKVTSDARIRATIPTLKLALEKGAKVMVTSHLGRPTEGEFKPEDSLQPVVDYLKNAGFNVRLEQDYLNGVDVKDGEIVVLENVRVNKGEKKNDPELGKKYAALCDVFVMDAFGTAHRAQASTYGVAEFAPIACAGPLLAAELDALGKALKEPARPMVAIVGGSKVSTKLEVLNSLSKIADQIIVGGGIANTFIAAAGHNVGKSLYEADLIPVAKELAANTDIPVPVDVRVGLEFSETATATEKAVNEVKDDESIFDIGDKSAEQLAEIIKNAKTVLWNGPVGVFEFPHFRKGTEIISHAIANSDAFSIAGGGDTLAAIDLFGIADKISYISTGGGAFLEFVEGKVLPAVEILEKRAKN</sequence>
<feature type="chain" id="PRO_1000058001" description="Phosphoglycerate kinase">
    <location>
        <begin position="1"/>
        <end position="386"/>
    </location>
</feature>
<feature type="binding site" evidence="1">
    <location>
        <begin position="21"/>
        <end position="23"/>
    </location>
    <ligand>
        <name>substrate</name>
    </ligand>
</feature>
<feature type="binding site" evidence="1">
    <location>
        <position position="36"/>
    </location>
    <ligand>
        <name>substrate</name>
    </ligand>
</feature>
<feature type="binding site" evidence="1">
    <location>
        <begin position="59"/>
        <end position="62"/>
    </location>
    <ligand>
        <name>substrate</name>
    </ligand>
</feature>
<feature type="binding site" evidence="1">
    <location>
        <position position="112"/>
    </location>
    <ligand>
        <name>substrate</name>
    </ligand>
</feature>
<feature type="binding site" evidence="1">
    <location>
        <position position="145"/>
    </location>
    <ligand>
        <name>substrate</name>
    </ligand>
</feature>
<feature type="binding site" evidence="1">
    <location>
        <position position="196"/>
    </location>
    <ligand>
        <name>ATP</name>
        <dbReference type="ChEBI" id="CHEBI:30616"/>
    </ligand>
</feature>
<feature type="binding site" evidence="1">
    <location>
        <position position="313"/>
    </location>
    <ligand>
        <name>ATP</name>
        <dbReference type="ChEBI" id="CHEBI:30616"/>
    </ligand>
</feature>
<feature type="binding site" evidence="1">
    <location>
        <begin position="339"/>
        <end position="342"/>
    </location>
    <ligand>
        <name>ATP</name>
        <dbReference type="ChEBI" id="CHEBI:30616"/>
    </ligand>
</feature>
<evidence type="ECO:0000255" key="1">
    <source>
        <dbReference type="HAMAP-Rule" id="MF_00145"/>
    </source>
</evidence>